<name>QUEF_BURP0</name>
<reference key="1">
    <citation type="journal article" date="2010" name="Genome Biol. Evol.">
        <title>Continuing evolution of Burkholderia mallei through genome reduction and large-scale rearrangements.</title>
        <authorList>
            <person name="Losada L."/>
            <person name="Ronning C.M."/>
            <person name="DeShazer D."/>
            <person name="Woods D."/>
            <person name="Fedorova N."/>
            <person name="Kim H.S."/>
            <person name="Shabalina S.A."/>
            <person name="Pearson T.R."/>
            <person name="Brinkac L."/>
            <person name="Tan P."/>
            <person name="Nandi T."/>
            <person name="Crabtree J."/>
            <person name="Badger J."/>
            <person name="Beckstrom-Sternberg S."/>
            <person name="Saqib M."/>
            <person name="Schutzer S.E."/>
            <person name="Keim P."/>
            <person name="Nierman W.C."/>
        </authorList>
    </citation>
    <scope>NUCLEOTIDE SEQUENCE [LARGE SCALE GENOMIC DNA]</scope>
    <source>
        <strain>1106a</strain>
    </source>
</reference>
<protein>
    <recommendedName>
        <fullName evidence="1">NADPH-dependent 7-cyano-7-deazaguanine reductase</fullName>
        <ecNumber evidence="1">1.7.1.13</ecNumber>
    </recommendedName>
    <alternativeName>
        <fullName evidence="1">7-cyano-7-carbaguanine reductase</fullName>
    </alternativeName>
    <alternativeName>
        <fullName evidence="1">NADPH-dependent nitrile oxidoreductase</fullName>
    </alternativeName>
    <alternativeName>
        <fullName evidence="1">PreQ(0) reductase</fullName>
    </alternativeName>
</protein>
<gene>
    <name evidence="1" type="primary">queF</name>
    <name type="ordered locus">BURPS1106A_0676</name>
</gene>
<keyword id="KW-0963">Cytoplasm</keyword>
<keyword id="KW-0521">NADP</keyword>
<keyword id="KW-0560">Oxidoreductase</keyword>
<keyword id="KW-0671">Queuosine biosynthesis</keyword>
<dbReference type="EC" id="1.7.1.13" evidence="1"/>
<dbReference type="EMBL" id="CP000572">
    <property type="protein sequence ID" value="ABN91463.1"/>
    <property type="molecule type" value="Genomic_DNA"/>
</dbReference>
<dbReference type="RefSeq" id="WP_004534248.1">
    <property type="nucleotide sequence ID" value="NC_009076.1"/>
</dbReference>
<dbReference type="SMR" id="A3NRI7"/>
<dbReference type="GeneID" id="93059142"/>
<dbReference type="KEGG" id="bpl:BURPS1106A_0676"/>
<dbReference type="HOGENOM" id="CLU_054738_0_0_4"/>
<dbReference type="UniPathway" id="UPA00392"/>
<dbReference type="Proteomes" id="UP000006738">
    <property type="component" value="Chromosome I"/>
</dbReference>
<dbReference type="GO" id="GO:0005737">
    <property type="term" value="C:cytoplasm"/>
    <property type="evidence" value="ECO:0007669"/>
    <property type="project" value="UniProtKB-SubCell"/>
</dbReference>
<dbReference type="GO" id="GO:0033739">
    <property type="term" value="F:preQ1 synthase activity"/>
    <property type="evidence" value="ECO:0007669"/>
    <property type="project" value="UniProtKB-UniRule"/>
</dbReference>
<dbReference type="GO" id="GO:0008616">
    <property type="term" value="P:queuosine biosynthetic process"/>
    <property type="evidence" value="ECO:0007669"/>
    <property type="project" value="UniProtKB-UniRule"/>
</dbReference>
<dbReference type="GO" id="GO:0006400">
    <property type="term" value="P:tRNA modification"/>
    <property type="evidence" value="ECO:0007669"/>
    <property type="project" value="UniProtKB-UniRule"/>
</dbReference>
<dbReference type="Gene3D" id="3.30.1130.10">
    <property type="match status" value="2"/>
</dbReference>
<dbReference type="HAMAP" id="MF_00817">
    <property type="entry name" value="QueF_type2"/>
    <property type="match status" value="1"/>
</dbReference>
<dbReference type="InterPro" id="IPR043133">
    <property type="entry name" value="GTP-CH-I_C/QueF"/>
</dbReference>
<dbReference type="InterPro" id="IPR050084">
    <property type="entry name" value="NADPH_dep_7-cyano-7-deazaG_red"/>
</dbReference>
<dbReference type="InterPro" id="IPR029500">
    <property type="entry name" value="QueF"/>
</dbReference>
<dbReference type="InterPro" id="IPR029139">
    <property type="entry name" value="QueF_N"/>
</dbReference>
<dbReference type="InterPro" id="IPR016428">
    <property type="entry name" value="QueF_type2"/>
</dbReference>
<dbReference type="NCBIfam" id="TIGR03138">
    <property type="entry name" value="QueF"/>
    <property type="match status" value="1"/>
</dbReference>
<dbReference type="PANTHER" id="PTHR34354">
    <property type="entry name" value="NADPH-DEPENDENT 7-CYANO-7-DEAZAGUANINE REDUCTASE"/>
    <property type="match status" value="1"/>
</dbReference>
<dbReference type="PANTHER" id="PTHR34354:SF1">
    <property type="entry name" value="NADPH-DEPENDENT 7-CYANO-7-DEAZAGUANINE REDUCTASE"/>
    <property type="match status" value="1"/>
</dbReference>
<dbReference type="Pfam" id="PF14489">
    <property type="entry name" value="QueF"/>
    <property type="match status" value="1"/>
</dbReference>
<dbReference type="Pfam" id="PF14819">
    <property type="entry name" value="QueF_N"/>
    <property type="match status" value="1"/>
</dbReference>
<dbReference type="PIRSF" id="PIRSF004750">
    <property type="entry name" value="Nitrile_oxidored_YqcD_prd"/>
    <property type="match status" value="1"/>
</dbReference>
<dbReference type="SUPFAM" id="SSF55620">
    <property type="entry name" value="Tetrahydrobiopterin biosynthesis enzymes-like"/>
    <property type="match status" value="1"/>
</dbReference>
<proteinExistence type="inferred from homology"/>
<evidence type="ECO:0000255" key="1">
    <source>
        <dbReference type="HAMAP-Rule" id="MF_00817"/>
    </source>
</evidence>
<sequence length="274" mass="30343">MNPEHSPLGKATVYANQYDASLLFPIPRAGAREQIGIGAPLPFFGTDIWNAYELSWLNARGKPQIAIATFYVPAESPNIVESKSFKLYLGSFAQTAFESADAVRDALKRDVSAACGASVTVRLATPAEFRKLQMDELDGLSLDRLDLDAHVYETDPSFLTASHGEAPVEETLVTDLLKSNCPVTGQPDWGSVQIHYVGAPIDHAGLLRYIISFRNHTGFHEQCVERIFVDILRACQPVKLAVYARYTRRGGLDINPFRTNYNQPMPDNARTARQ</sequence>
<organism>
    <name type="scientific">Burkholderia pseudomallei (strain 1106a)</name>
    <dbReference type="NCBI Taxonomy" id="357348"/>
    <lineage>
        <taxon>Bacteria</taxon>
        <taxon>Pseudomonadati</taxon>
        <taxon>Pseudomonadota</taxon>
        <taxon>Betaproteobacteria</taxon>
        <taxon>Burkholderiales</taxon>
        <taxon>Burkholderiaceae</taxon>
        <taxon>Burkholderia</taxon>
        <taxon>pseudomallei group</taxon>
    </lineage>
</organism>
<comment type="function">
    <text evidence="1">Catalyzes the NADPH-dependent reduction of 7-cyano-7-deazaguanine (preQ0) to 7-aminomethyl-7-deazaguanine (preQ1).</text>
</comment>
<comment type="catalytic activity">
    <reaction evidence="1">
        <text>7-aminomethyl-7-carbaguanine + 2 NADP(+) = 7-cyano-7-deazaguanine + 2 NADPH + 3 H(+)</text>
        <dbReference type="Rhea" id="RHEA:13409"/>
        <dbReference type="ChEBI" id="CHEBI:15378"/>
        <dbReference type="ChEBI" id="CHEBI:45075"/>
        <dbReference type="ChEBI" id="CHEBI:57783"/>
        <dbReference type="ChEBI" id="CHEBI:58349"/>
        <dbReference type="ChEBI" id="CHEBI:58703"/>
        <dbReference type="EC" id="1.7.1.13"/>
    </reaction>
</comment>
<comment type="pathway">
    <text evidence="1">tRNA modification; tRNA-queuosine biosynthesis.</text>
</comment>
<comment type="subunit">
    <text evidence="1">Homodimer.</text>
</comment>
<comment type="subcellular location">
    <subcellularLocation>
        <location evidence="1">Cytoplasm</location>
    </subcellularLocation>
</comment>
<comment type="similarity">
    <text evidence="1">Belongs to the GTP cyclohydrolase I family. QueF type 2 subfamily.</text>
</comment>
<accession>A3NRI7</accession>
<feature type="chain" id="PRO_1000062333" description="NADPH-dependent 7-cyano-7-deazaguanine reductase">
    <location>
        <begin position="1"/>
        <end position="274"/>
    </location>
</feature>
<feature type="active site" description="Thioimide intermediate" evidence="1">
    <location>
        <position position="181"/>
    </location>
</feature>
<feature type="active site" description="Proton donor" evidence="1">
    <location>
        <position position="188"/>
    </location>
</feature>
<feature type="binding site" evidence="1">
    <location>
        <begin position="80"/>
        <end position="82"/>
    </location>
    <ligand>
        <name>substrate</name>
    </ligand>
</feature>
<feature type="binding site" evidence="1">
    <location>
        <begin position="82"/>
        <end position="83"/>
    </location>
    <ligand>
        <name>NADPH</name>
        <dbReference type="ChEBI" id="CHEBI:57783"/>
    </ligand>
</feature>
<feature type="binding site" evidence="1">
    <location>
        <begin position="220"/>
        <end position="221"/>
    </location>
    <ligand>
        <name>substrate</name>
    </ligand>
</feature>
<feature type="binding site" evidence="1">
    <location>
        <begin position="249"/>
        <end position="250"/>
    </location>
    <ligand>
        <name>NADPH</name>
        <dbReference type="ChEBI" id="CHEBI:57783"/>
    </ligand>
</feature>